<name>DYR_LACLA</name>
<comment type="function">
    <text evidence="1">Key enzyme in folate metabolism. Catalyzes an essential reaction for de novo glycine and purine synthesis, and for DNA precursor synthesis (By similarity).</text>
</comment>
<comment type="catalytic activity">
    <reaction evidence="2">
        <text>(6S)-5,6,7,8-tetrahydrofolate + NADP(+) = 7,8-dihydrofolate + NADPH + H(+)</text>
        <dbReference type="Rhea" id="RHEA:15009"/>
        <dbReference type="ChEBI" id="CHEBI:15378"/>
        <dbReference type="ChEBI" id="CHEBI:57451"/>
        <dbReference type="ChEBI" id="CHEBI:57453"/>
        <dbReference type="ChEBI" id="CHEBI:57783"/>
        <dbReference type="ChEBI" id="CHEBI:58349"/>
        <dbReference type="EC" id="1.5.1.3"/>
    </reaction>
</comment>
<comment type="pathway">
    <text>Cofactor biosynthesis; tetrahydrofolate biosynthesis; 5,6,7,8-tetrahydrofolate from 7,8-dihydrofolate: step 1/1.</text>
</comment>
<comment type="similarity">
    <text evidence="3">Belongs to the dihydrofolate reductase family.</text>
</comment>
<sequence>MIIGIWAEDEAGLIGEADKMPWSLPAEQQHFKETTMNQVILMGRKTFEGMNKRVLPGRISIILTRDETYQSDNEKVLIMHSPKEVLDWYHKQNKDLFITGGAEILALFESELELLYRTVVHEKFKGDTYFPSTFDFGRFKLVSEKFHDKDERNSYTFTIKKYEKVKQP</sequence>
<proteinExistence type="inferred from homology"/>
<dbReference type="EC" id="1.5.1.3"/>
<dbReference type="EMBL" id="X60681">
    <property type="protein sequence ID" value="CAA43094.1"/>
    <property type="molecule type" value="Genomic_DNA"/>
</dbReference>
<dbReference type="EMBL" id="AE005176">
    <property type="protein sequence ID" value="AAK05248.1"/>
    <property type="molecule type" value="Genomic_DNA"/>
</dbReference>
<dbReference type="PIR" id="F86768">
    <property type="entry name" value="F86768"/>
</dbReference>
<dbReference type="PIR" id="S47467">
    <property type="entry name" value="S47467"/>
</dbReference>
<dbReference type="RefSeq" id="NP_267306.1">
    <property type="nucleotide sequence ID" value="NC_002662.1"/>
</dbReference>
<dbReference type="RefSeq" id="WP_010905786.1">
    <property type="nucleotide sequence ID" value="NC_002662.1"/>
</dbReference>
<dbReference type="SMR" id="Q59487"/>
<dbReference type="ChEMBL" id="CHEMBL4012"/>
<dbReference type="DrugCentral" id="Q59487"/>
<dbReference type="PaxDb" id="272623-L162872"/>
<dbReference type="EnsemblBacteria" id="AAK05248">
    <property type="protein sequence ID" value="AAK05248"/>
    <property type="gene ID" value="L162872"/>
</dbReference>
<dbReference type="KEGG" id="lla:L162872"/>
<dbReference type="PATRIC" id="fig|272623.7.peg.1229"/>
<dbReference type="eggNOG" id="COG0262">
    <property type="taxonomic scope" value="Bacteria"/>
</dbReference>
<dbReference type="HOGENOM" id="CLU_043966_5_2_9"/>
<dbReference type="OrthoDB" id="9804315at2"/>
<dbReference type="UniPathway" id="UPA00077">
    <property type="reaction ID" value="UER00158"/>
</dbReference>
<dbReference type="Proteomes" id="UP000002196">
    <property type="component" value="Chromosome"/>
</dbReference>
<dbReference type="GO" id="GO:0005829">
    <property type="term" value="C:cytosol"/>
    <property type="evidence" value="ECO:0007669"/>
    <property type="project" value="TreeGrafter"/>
</dbReference>
<dbReference type="GO" id="GO:0004146">
    <property type="term" value="F:dihydrofolate reductase activity"/>
    <property type="evidence" value="ECO:0007669"/>
    <property type="project" value="UniProtKB-EC"/>
</dbReference>
<dbReference type="GO" id="GO:0050661">
    <property type="term" value="F:NADP binding"/>
    <property type="evidence" value="ECO:0007669"/>
    <property type="project" value="InterPro"/>
</dbReference>
<dbReference type="GO" id="GO:0046452">
    <property type="term" value="P:dihydrofolate metabolic process"/>
    <property type="evidence" value="ECO:0007669"/>
    <property type="project" value="TreeGrafter"/>
</dbReference>
<dbReference type="GO" id="GO:0046655">
    <property type="term" value="P:folic acid metabolic process"/>
    <property type="evidence" value="ECO:0007669"/>
    <property type="project" value="TreeGrafter"/>
</dbReference>
<dbReference type="GO" id="GO:0006730">
    <property type="term" value="P:one-carbon metabolic process"/>
    <property type="evidence" value="ECO:0007669"/>
    <property type="project" value="UniProtKB-KW"/>
</dbReference>
<dbReference type="GO" id="GO:0046654">
    <property type="term" value="P:tetrahydrofolate biosynthetic process"/>
    <property type="evidence" value="ECO:0007669"/>
    <property type="project" value="UniProtKB-UniPathway"/>
</dbReference>
<dbReference type="CDD" id="cd00209">
    <property type="entry name" value="DHFR"/>
    <property type="match status" value="1"/>
</dbReference>
<dbReference type="Gene3D" id="3.40.430.10">
    <property type="entry name" value="Dihydrofolate Reductase, subunit A"/>
    <property type="match status" value="1"/>
</dbReference>
<dbReference type="InterPro" id="IPR012259">
    <property type="entry name" value="DHFR"/>
</dbReference>
<dbReference type="InterPro" id="IPR024072">
    <property type="entry name" value="DHFR-like_dom_sf"/>
</dbReference>
<dbReference type="InterPro" id="IPR017925">
    <property type="entry name" value="DHFR_CS"/>
</dbReference>
<dbReference type="InterPro" id="IPR001796">
    <property type="entry name" value="DHFR_dom"/>
</dbReference>
<dbReference type="PANTHER" id="PTHR48069">
    <property type="entry name" value="DIHYDROFOLATE REDUCTASE"/>
    <property type="match status" value="1"/>
</dbReference>
<dbReference type="PANTHER" id="PTHR48069:SF3">
    <property type="entry name" value="DIHYDROFOLATE REDUCTASE"/>
    <property type="match status" value="1"/>
</dbReference>
<dbReference type="Pfam" id="PF00186">
    <property type="entry name" value="DHFR_1"/>
    <property type="match status" value="1"/>
</dbReference>
<dbReference type="PIRSF" id="PIRSF000194">
    <property type="entry name" value="DHFR"/>
    <property type="match status" value="1"/>
</dbReference>
<dbReference type="PRINTS" id="PR00070">
    <property type="entry name" value="DHFR"/>
</dbReference>
<dbReference type="SUPFAM" id="SSF53597">
    <property type="entry name" value="Dihydrofolate reductase-like"/>
    <property type="match status" value="1"/>
</dbReference>
<dbReference type="PROSITE" id="PS00075">
    <property type="entry name" value="DHFR_1"/>
    <property type="match status" value="1"/>
</dbReference>
<dbReference type="PROSITE" id="PS51330">
    <property type="entry name" value="DHFR_2"/>
    <property type="match status" value="1"/>
</dbReference>
<feature type="chain" id="PRO_0000186394" description="Dihydrofolate reductase">
    <location>
        <begin position="1"/>
        <end position="168"/>
    </location>
</feature>
<feature type="domain" description="DHFR" evidence="2">
    <location>
        <begin position="1"/>
        <end position="164"/>
    </location>
</feature>
<feature type="binding site" evidence="1">
    <location>
        <begin position="5"/>
        <end position="7"/>
    </location>
    <ligand>
        <name>substrate</name>
    </ligand>
</feature>
<feature type="binding site" evidence="1">
    <location>
        <begin position="6"/>
        <end position="7"/>
    </location>
    <ligand>
        <name>NADP(+)</name>
        <dbReference type="ChEBI" id="CHEBI:58349"/>
    </ligand>
</feature>
<feature type="binding site" evidence="1">
    <location>
        <begin position="14"/>
        <end position="19"/>
    </location>
    <ligand>
        <name>NADP(+)</name>
        <dbReference type="ChEBI" id="CHEBI:58349"/>
    </ligand>
</feature>
<feature type="binding site" evidence="1">
    <location>
        <position position="27"/>
    </location>
    <ligand>
        <name>substrate</name>
    </ligand>
</feature>
<feature type="binding site" evidence="1">
    <location>
        <begin position="43"/>
        <end position="46"/>
    </location>
    <ligand>
        <name>NADP(+)</name>
        <dbReference type="ChEBI" id="CHEBI:58349"/>
    </ligand>
</feature>
<feature type="binding site" evidence="1">
    <location>
        <position position="58"/>
    </location>
    <ligand>
        <name>substrate</name>
    </ligand>
</feature>
<feature type="binding site" evidence="1">
    <location>
        <begin position="63"/>
        <end position="66"/>
    </location>
    <ligand>
        <name>NADP(+)</name>
        <dbReference type="ChEBI" id="CHEBI:58349"/>
    </ligand>
</feature>
<feature type="binding site" evidence="1">
    <location>
        <begin position="99"/>
        <end position="104"/>
    </location>
    <ligand>
        <name>NADP(+)</name>
        <dbReference type="ChEBI" id="CHEBI:58349"/>
    </ligand>
</feature>
<feature type="binding site" evidence="1">
    <location>
        <position position="118"/>
    </location>
    <ligand>
        <name>substrate</name>
    </ligand>
</feature>
<feature type="sequence conflict" description="In Ref. 1; CAA43094." evidence="3" ref="1">
    <original>A</original>
    <variation>Q</variation>
    <location>
        <position position="11"/>
    </location>
</feature>
<feature type="sequence conflict" description="In Ref. 1; CAA43094." evidence="3" ref="1">
    <original>Q</original>
    <variation>K</variation>
    <location>
        <position position="29"/>
    </location>
</feature>
<feature type="sequence conflict" description="In Ref. 1; CAA43094." evidence="3" ref="1">
    <original>D</original>
    <variation>E</variation>
    <location>
        <position position="72"/>
    </location>
</feature>
<feature type="sequence conflict" description="In Ref. 1; CAA43094." evidence="3" ref="1">
    <original>H</original>
    <variation>Y</variation>
    <location>
        <position position="90"/>
    </location>
</feature>
<feature type="sequence conflict" description="In Ref. 1; CAA43094." evidence="3" ref="1">
    <original>N</original>
    <variation>D</variation>
    <location>
        <position position="93"/>
    </location>
</feature>
<feature type="sequence conflict" description="In Ref. 1; CAA43094." evidence="3" ref="1">
    <original>K</original>
    <variation>Q</variation>
    <location>
        <position position="125"/>
    </location>
</feature>
<feature type="sequence conflict" description="In Ref. 1; CAA43094." evidence="3" ref="1">
    <original>ST</original>
    <variation>TH</variation>
    <location>
        <begin position="132"/>
        <end position="133"/>
    </location>
</feature>
<feature type="sequence conflict" description="In Ref. 1; CAA43094." evidence="3" ref="1">
    <original>R</original>
    <variation>K</variation>
    <location>
        <position position="138"/>
    </location>
</feature>
<feature type="sequence conflict" description="In Ref. 1; CAA43094." evidence="3" ref="1">
    <original>L</original>
    <variation>V</variation>
    <location>
        <position position="141"/>
    </location>
</feature>
<feature type="sequence conflict" description="In Ref. 1; CAA43094." evidence="3" ref="1">
    <original>K</original>
    <variation>I</variation>
    <location>
        <position position="145"/>
    </location>
</feature>
<feature type="sequence conflict" description="In Ref. 1; CAA43094." evidence="3" ref="1">
    <original>S</original>
    <variation>A</variation>
    <location>
        <position position="154"/>
    </location>
</feature>
<keyword id="KW-0521">NADP</keyword>
<keyword id="KW-0554">One-carbon metabolism</keyword>
<keyword id="KW-0560">Oxidoreductase</keyword>
<keyword id="KW-1185">Reference proteome</keyword>
<organism>
    <name type="scientific">Lactococcus lactis subsp. lactis (strain IL1403)</name>
    <name type="common">Streptococcus lactis</name>
    <dbReference type="NCBI Taxonomy" id="272623"/>
    <lineage>
        <taxon>Bacteria</taxon>
        <taxon>Bacillati</taxon>
        <taxon>Bacillota</taxon>
        <taxon>Bacilli</taxon>
        <taxon>Lactobacillales</taxon>
        <taxon>Streptococcaceae</taxon>
        <taxon>Lactococcus</taxon>
    </lineage>
</organism>
<gene>
    <name type="primary">folA</name>
    <name type="synonym">dhfR</name>
    <name type="ordered locus">LL1150</name>
    <name type="ORF">L162872</name>
</gene>
<reference key="1">
    <citation type="journal article" date="1995" name="Appl. Environ. Microbiol.">
        <title>Cloning and molecular analysis of the dihydrofolate reductase gene from Lactococcus lactis.</title>
        <authorList>
            <person name="Leszczynska K."/>
            <person name="Bolhuis A."/>
            <person name="Leenhouts K."/>
            <person name="Venema G."/>
            <person name="Ceglowski P."/>
        </authorList>
    </citation>
    <scope>NUCLEOTIDE SEQUENCE [GENOMIC DNA]</scope>
    <source>
        <strain>51-MG/7</strain>
    </source>
</reference>
<reference key="2">
    <citation type="journal article" date="2001" name="Genome Res.">
        <title>The complete genome sequence of the lactic acid bacterium Lactococcus lactis ssp. lactis IL1403.</title>
        <authorList>
            <person name="Bolotin A."/>
            <person name="Wincker P."/>
            <person name="Mauger S."/>
            <person name="Jaillon O."/>
            <person name="Malarme K."/>
            <person name="Weissenbach J."/>
            <person name="Ehrlich S.D."/>
            <person name="Sorokin A."/>
        </authorList>
    </citation>
    <scope>NUCLEOTIDE SEQUENCE [LARGE SCALE GENOMIC DNA]</scope>
    <source>
        <strain>IL1403</strain>
    </source>
</reference>
<protein>
    <recommendedName>
        <fullName>Dihydrofolate reductase</fullName>
        <ecNumber>1.5.1.3</ecNumber>
    </recommendedName>
</protein>
<evidence type="ECO:0000250" key="1"/>
<evidence type="ECO:0000255" key="2">
    <source>
        <dbReference type="PROSITE-ProRule" id="PRU00660"/>
    </source>
</evidence>
<evidence type="ECO:0000305" key="3"/>
<accession>Q59487</accession>